<feature type="chain" id="PRO_0000303072" description="SUZ RNA-binding domain-containing">
    <location>
        <begin position="1"/>
        <end position="152"/>
    </location>
</feature>
<feature type="domain" description="SUZ" evidence="1">
    <location>
        <begin position="42"/>
        <end position="107"/>
    </location>
</feature>
<feature type="domain" description="SUZ-C" evidence="2">
    <location>
        <begin position="111"/>
        <end position="152"/>
    </location>
</feature>
<feature type="region of interest" description="Disordered" evidence="3">
    <location>
        <begin position="30"/>
        <end position="86"/>
    </location>
</feature>
<feature type="region of interest" description="Disordered" evidence="3">
    <location>
        <begin position="100"/>
        <end position="152"/>
    </location>
</feature>
<feature type="compositionally biased region" description="Polar residues" evidence="3">
    <location>
        <begin position="70"/>
        <end position="80"/>
    </location>
</feature>
<feature type="compositionally biased region" description="Basic and acidic residues" evidence="3">
    <location>
        <begin position="113"/>
        <end position="130"/>
    </location>
</feature>
<name>SZRD1_CHICK</name>
<dbReference type="EMBL" id="AJ720259">
    <property type="protein sequence ID" value="CAG31918.1"/>
    <property type="molecule type" value="mRNA"/>
</dbReference>
<dbReference type="RefSeq" id="NP_001026051.1">
    <property type="nucleotide sequence ID" value="NM_001030880.2"/>
</dbReference>
<dbReference type="SMR" id="Q5ZK25"/>
<dbReference type="FunCoup" id="Q5ZK25">
    <property type="interactions" value="737"/>
</dbReference>
<dbReference type="STRING" id="9031.ENSGALP00000072906"/>
<dbReference type="PaxDb" id="9031-ENSGALP00000005915"/>
<dbReference type="Ensembl" id="ENSGALT00010049069.1">
    <property type="protein sequence ID" value="ENSGALP00010029013.1"/>
    <property type="gene ID" value="ENSGALG00010020321.1"/>
</dbReference>
<dbReference type="GeneID" id="419462"/>
<dbReference type="KEGG" id="gga:419462"/>
<dbReference type="CTD" id="26099"/>
<dbReference type="VEuPathDB" id="HostDB:geneid_419462"/>
<dbReference type="eggNOG" id="ENOG502RZH5">
    <property type="taxonomic scope" value="Eukaryota"/>
</dbReference>
<dbReference type="GeneTree" id="ENSGT00390000005532"/>
<dbReference type="HOGENOM" id="CLU_120658_0_0_1"/>
<dbReference type="InParanoid" id="Q5ZK25"/>
<dbReference type="OrthoDB" id="5373615at2759"/>
<dbReference type="PhylomeDB" id="Q5ZK25"/>
<dbReference type="TreeFam" id="TF324643"/>
<dbReference type="PRO" id="PR:Q5ZK25"/>
<dbReference type="Proteomes" id="UP000000539">
    <property type="component" value="Chromosome 21"/>
</dbReference>
<dbReference type="Bgee" id="ENSGALG00000003734">
    <property type="expression patterns" value="Expressed in skeletal muscle tissue and 12 other cell types or tissues"/>
</dbReference>
<dbReference type="InterPro" id="IPR024771">
    <property type="entry name" value="SUZ"/>
</dbReference>
<dbReference type="InterPro" id="IPR024642">
    <property type="entry name" value="SUZ-C"/>
</dbReference>
<dbReference type="InterPro" id="IPR039228">
    <property type="entry name" value="SZRD1"/>
</dbReference>
<dbReference type="PANTHER" id="PTHR31796">
    <property type="entry name" value="SUZ DOMAIN-CONTAINING PROTEIN 1"/>
    <property type="match status" value="1"/>
</dbReference>
<dbReference type="PANTHER" id="PTHR31796:SF2">
    <property type="entry name" value="SUZ DOMAIN-CONTAINING PROTEIN 1"/>
    <property type="match status" value="1"/>
</dbReference>
<dbReference type="Pfam" id="PF12752">
    <property type="entry name" value="SUZ"/>
    <property type="match status" value="1"/>
</dbReference>
<dbReference type="Pfam" id="PF12901">
    <property type="entry name" value="SUZ-C"/>
    <property type="match status" value="1"/>
</dbReference>
<dbReference type="PROSITE" id="PS51673">
    <property type="entry name" value="SUZ"/>
    <property type="match status" value="1"/>
</dbReference>
<dbReference type="PROSITE" id="PS51938">
    <property type="entry name" value="SUZ_C"/>
    <property type="match status" value="1"/>
</dbReference>
<accession>Q5ZK25</accession>
<reference key="1">
    <citation type="journal article" date="2005" name="Genome Biol.">
        <title>Full-length cDNAs from chicken bursal lymphocytes to facilitate gene function analysis.</title>
        <authorList>
            <person name="Caldwell R.B."/>
            <person name="Kierzek A.M."/>
            <person name="Arakawa H."/>
            <person name="Bezzubov Y."/>
            <person name="Zaim J."/>
            <person name="Fiedler P."/>
            <person name="Kutter S."/>
            <person name="Blagodatski A."/>
            <person name="Kostovska D."/>
            <person name="Koter M."/>
            <person name="Plachy J."/>
            <person name="Carninci P."/>
            <person name="Hayashizaki Y."/>
            <person name="Buerstedde J.-M."/>
        </authorList>
    </citation>
    <scope>NUCLEOTIDE SEQUENCE [LARGE SCALE MRNA]</scope>
    <source>
        <strain>CB</strain>
        <tissue>Bursa of Fabricius</tissue>
    </source>
</reference>
<gene>
    <name type="primary">SZRD1</name>
    <name type="ORF">RCJMB04_13j19</name>
</gene>
<proteinExistence type="evidence at transcript level"/>
<protein>
    <recommendedName>
        <fullName>SUZ RNA-binding domain-containing</fullName>
        <shortName>SUZ domain-containing protein 1</shortName>
    </recommendedName>
</protein>
<sequence length="152" mass="17068">MEDEEVAESWEEAADSGEIDRRLEKKLKITQKESRKSKSPPKVPIVIQDDSVPSGPPPQIRILKRPATNGVLSNPNSTTRPAFPVKSLAQREAEYAEARKRILGSASPEEEQEKPILDRPTRISQPEDIRQPNNVIRQPLGPDGSQGFKQRR</sequence>
<keyword id="KW-1185">Reference proteome</keyword>
<evidence type="ECO:0000255" key="1">
    <source>
        <dbReference type="PROSITE-ProRule" id="PRU01009"/>
    </source>
</evidence>
<evidence type="ECO:0000255" key="2">
    <source>
        <dbReference type="PROSITE-ProRule" id="PRU01287"/>
    </source>
</evidence>
<evidence type="ECO:0000256" key="3">
    <source>
        <dbReference type="SAM" id="MobiDB-lite"/>
    </source>
</evidence>
<evidence type="ECO:0000305" key="4"/>
<organism>
    <name type="scientific">Gallus gallus</name>
    <name type="common">Chicken</name>
    <dbReference type="NCBI Taxonomy" id="9031"/>
    <lineage>
        <taxon>Eukaryota</taxon>
        <taxon>Metazoa</taxon>
        <taxon>Chordata</taxon>
        <taxon>Craniata</taxon>
        <taxon>Vertebrata</taxon>
        <taxon>Euteleostomi</taxon>
        <taxon>Archelosauria</taxon>
        <taxon>Archosauria</taxon>
        <taxon>Dinosauria</taxon>
        <taxon>Saurischia</taxon>
        <taxon>Theropoda</taxon>
        <taxon>Coelurosauria</taxon>
        <taxon>Aves</taxon>
        <taxon>Neognathae</taxon>
        <taxon>Galloanserae</taxon>
        <taxon>Galliformes</taxon>
        <taxon>Phasianidae</taxon>
        <taxon>Phasianinae</taxon>
        <taxon>Gallus</taxon>
    </lineage>
</organism>
<comment type="similarity">
    <text evidence="4">Belongs to the SZRD1 family.</text>
</comment>